<reference key="1">
    <citation type="journal article" date="1999" name="Electrophoresis">
        <title>Separation and characterization of needle and xylem maritime pine proteins.</title>
        <authorList>
            <person name="Costa P."/>
            <person name="Pionneau C."/>
            <person name="Bauw G."/>
            <person name="Dubos C."/>
            <person name="Bahrman N."/>
            <person name="Kremer A."/>
            <person name="Frigerio J.-M."/>
            <person name="Plomion C."/>
        </authorList>
    </citation>
    <scope>PROTEIN SEQUENCE</scope>
    <source>
        <tissue>Needle</tissue>
    </source>
</reference>
<feature type="chain" id="PRO_0000203523" description="Oxygen-evolving enhancer protein 1">
    <location>
        <begin position="1"/>
        <end position="26" status="greater than"/>
    </location>
</feature>
<feature type="region of interest" description="Disordered" evidence="2">
    <location>
        <begin position="1"/>
        <end position="26"/>
    </location>
</feature>
<feature type="non-consecutive residues" evidence="3">
    <location>
        <begin position="9"/>
        <end position="10"/>
    </location>
</feature>
<feature type="non-terminal residue">
    <location>
        <position position="26"/>
    </location>
</feature>
<proteinExistence type="evidence at protein level"/>
<evidence type="ECO:0000250" key="1"/>
<evidence type="ECO:0000256" key="2">
    <source>
        <dbReference type="SAM" id="MobiDB-lite"/>
    </source>
</evidence>
<evidence type="ECO:0000305" key="3"/>
<dbReference type="GO" id="GO:0009535">
    <property type="term" value="C:chloroplast thylakoid membrane"/>
    <property type="evidence" value="ECO:0007669"/>
    <property type="project" value="UniProtKB-SubCell"/>
</dbReference>
<dbReference type="GO" id="GO:0009523">
    <property type="term" value="C:photosystem II"/>
    <property type="evidence" value="ECO:0007669"/>
    <property type="project" value="UniProtKB-KW"/>
</dbReference>
<dbReference type="GO" id="GO:0015979">
    <property type="term" value="P:photosynthesis"/>
    <property type="evidence" value="ECO:0007669"/>
    <property type="project" value="UniProtKB-KW"/>
</dbReference>
<dbReference type="Gene3D" id="3.30.2050.10">
    <property type="entry name" value="photosynthetic oxygen evolving center domain"/>
    <property type="match status" value="1"/>
</dbReference>
<name>PSBO_PINPS</name>
<protein>
    <recommendedName>
        <fullName>Oxygen-evolving enhancer protein 1</fullName>
        <shortName>OEE1</shortName>
    </recommendedName>
    <alternativeName>
        <fullName>33 kDa subunit of oxygen evolving system of photosystem II</fullName>
    </alternativeName>
    <alternativeName>
        <fullName>33 kDa thylakoid membrane protein</fullName>
    </alternativeName>
</protein>
<comment type="function">
    <text evidence="1">Stabilizes the manganese cluster which is the primary site of water splitting.</text>
</comment>
<comment type="subcellular location">
    <subcellularLocation>
        <location evidence="1">Plastid</location>
        <location evidence="1">Chloroplast thylakoid membrane</location>
    </subcellularLocation>
    <text evidence="1">Associated with the photosystem II complex.</text>
</comment>
<comment type="induction">
    <text>By water stress.</text>
</comment>
<comment type="miscellaneous">
    <text>On the 2D-gel the determined pI of this protein (spot N146) is: 5.3, its MW is: 29 kDa.</text>
</comment>
<comment type="similarity">
    <text evidence="3">Belongs to the PsbO family.</text>
</comment>
<accession>P81665</accession>
<sequence length="26" mass="2641">LTYDEIQSKGGSTGYDNAVALPAGGR</sequence>
<keyword id="KW-0150">Chloroplast</keyword>
<keyword id="KW-0903">Direct protein sequencing</keyword>
<keyword id="KW-0464">Manganese</keyword>
<keyword id="KW-0472">Membrane</keyword>
<keyword id="KW-0602">Photosynthesis</keyword>
<keyword id="KW-0604">Photosystem II</keyword>
<keyword id="KW-0934">Plastid</keyword>
<keyword id="KW-0346">Stress response</keyword>
<keyword id="KW-0793">Thylakoid</keyword>
<organism>
    <name type="scientific">Pinus pinaster</name>
    <name type="common">Maritime pine</name>
    <dbReference type="NCBI Taxonomy" id="71647"/>
    <lineage>
        <taxon>Eukaryota</taxon>
        <taxon>Viridiplantae</taxon>
        <taxon>Streptophyta</taxon>
        <taxon>Embryophyta</taxon>
        <taxon>Tracheophyta</taxon>
        <taxon>Spermatophyta</taxon>
        <taxon>Pinopsida</taxon>
        <taxon>Pinidae</taxon>
        <taxon>Conifers I</taxon>
        <taxon>Pinales</taxon>
        <taxon>Pinaceae</taxon>
        <taxon>Pinus</taxon>
        <taxon>Pinus subgen. Pinus</taxon>
    </lineage>
</organism>
<gene>
    <name type="primary">PSBO</name>
</gene>